<protein>
    <recommendedName>
        <fullName>Postacrosomal sheath WW domain-binding protein</fullName>
    </recommendedName>
    <alternativeName>
        <fullName>WW domain-binding protein 2-like</fullName>
    </alternativeName>
</protein>
<accession>Q6ICG8</accession>
<accession>A3KFF7</accession>
<accession>A8MSG5</accession>
<accession>B3KXX4</accession>
<accession>Q8TBF0</accession>
<accession>Q8TBF3</accession>
<organism>
    <name type="scientific">Homo sapiens</name>
    <name type="common">Human</name>
    <dbReference type="NCBI Taxonomy" id="9606"/>
    <lineage>
        <taxon>Eukaryota</taxon>
        <taxon>Metazoa</taxon>
        <taxon>Chordata</taxon>
        <taxon>Craniata</taxon>
        <taxon>Vertebrata</taxon>
        <taxon>Euteleostomi</taxon>
        <taxon>Mammalia</taxon>
        <taxon>Eutheria</taxon>
        <taxon>Euarchontoglires</taxon>
        <taxon>Primates</taxon>
        <taxon>Haplorrhini</taxon>
        <taxon>Catarrhini</taxon>
        <taxon>Hominidae</taxon>
        <taxon>Homo</taxon>
    </lineage>
</organism>
<gene>
    <name type="primary">WBP2NL</name>
    <name type="synonym">PAWP</name>
</gene>
<keyword id="KW-0469">Meiosis</keyword>
<keyword id="KW-1267">Proteomics identification</keyword>
<keyword id="KW-1185">Reference proteome</keyword>
<keyword id="KW-0677">Repeat</keyword>
<feature type="chain" id="PRO_0000289127" description="Postacrosomal sheath WW domain-binding protein">
    <location>
        <begin position="1"/>
        <end position="309"/>
    </location>
</feature>
<feature type="domain" description="GRAM">
    <location>
        <begin position="45"/>
        <end position="87"/>
    </location>
</feature>
<feature type="repeat" description="1">
    <location>
        <begin position="175"/>
        <end position="181"/>
    </location>
</feature>
<feature type="repeat" description="2">
    <location>
        <begin position="182"/>
        <end position="188"/>
    </location>
</feature>
<feature type="repeat" description="3">
    <location>
        <begin position="189"/>
        <end position="195"/>
    </location>
</feature>
<feature type="repeat" description="4">
    <location>
        <begin position="217"/>
        <end position="223"/>
    </location>
</feature>
<feature type="repeat" description="5">
    <location>
        <begin position="224"/>
        <end position="230"/>
    </location>
</feature>
<feature type="repeat" description="6">
    <location>
        <begin position="231"/>
        <end position="237"/>
    </location>
</feature>
<feature type="repeat" description="7">
    <location>
        <begin position="238"/>
        <end position="244"/>
    </location>
</feature>
<feature type="repeat" description="8">
    <location>
        <begin position="245"/>
        <end position="251"/>
    </location>
</feature>
<feature type="repeat" description="9">
    <location>
        <begin position="252"/>
        <end position="258"/>
    </location>
</feature>
<feature type="repeat" description="10">
    <location>
        <begin position="259"/>
        <end position="265"/>
    </location>
</feature>
<feature type="region of interest" description="10 X 7 AA tandem repeat of Y-G-X-P-P-X-G">
    <location>
        <begin position="175"/>
        <end position="265"/>
    </location>
</feature>
<feature type="region of interest" description="Disordered" evidence="2">
    <location>
        <begin position="251"/>
        <end position="309"/>
    </location>
</feature>
<feature type="short sequence motif" description="PPxY motif">
    <location>
        <begin position="186"/>
        <end position="189"/>
    </location>
</feature>
<feature type="compositionally biased region" description="Low complexity" evidence="2">
    <location>
        <begin position="251"/>
        <end position="272"/>
    </location>
</feature>
<feature type="compositionally biased region" description="Polar residues" evidence="2">
    <location>
        <begin position="298"/>
        <end position="309"/>
    </location>
</feature>
<feature type="sequence variant" id="VAR_032578" description="In dbSNP:rs17002790.">
    <original>Q</original>
    <variation>E</variation>
    <location>
        <position position="5"/>
    </location>
</feature>
<feature type="sequence variant" id="VAR_032579" description="In dbSNP:rs133335." evidence="3">
    <original>D</original>
    <variation>G</variation>
    <location>
        <position position="121"/>
    </location>
</feature>
<feature type="sequence variant" id="VAR_032580" description="In dbSNP:rs17002802.">
    <original>C</original>
    <variation>F</variation>
    <location>
        <position position="170"/>
    </location>
</feature>
<feature type="sequence variant" id="VAR_032581" description="In dbSNP:rs2301521." evidence="3">
    <original>Q</original>
    <variation>H</variation>
    <location>
        <position position="285"/>
    </location>
</feature>
<feature type="sequence conflict" description="In Ref. 5; AAQ02873." evidence="5" ref="5">
    <original>A</original>
    <variation>V</variation>
    <location>
        <position position="136"/>
    </location>
</feature>
<name>WBP2L_HUMAN</name>
<evidence type="ECO:0000250" key="1"/>
<evidence type="ECO:0000256" key="2">
    <source>
        <dbReference type="SAM" id="MobiDB-lite"/>
    </source>
</evidence>
<evidence type="ECO:0000269" key="3">
    <source>
    </source>
</evidence>
<evidence type="ECO:0000269" key="4">
    <source>
    </source>
</evidence>
<evidence type="ECO:0000305" key="5"/>
<sequence length="309" mass="31909">MAVNQSHTENRRGALIPNGESLLKRSPNVELSFPQRSEGSNVFSGRKTGTLFLTSYRVIFITSCSISDPMLSFMMPFDLMTNLTVEQPVFAANFIKGTIQAAPYGGWEGQATFKLVFRNGDAIEFAQLMVKAASAAARGFPLRTLNDWFSSMGIYVITGEGNMCTPQMPCSVIVYGAPPAGYGAPPPGYGAPPAGYGAQPVGNEGPPVGYRASPVRYGAPPLGYGAPPAGYGAPPLGYGAPPLGYGTPPLGYGAPPLGYGAPPAGNEGPPAGYRASPAGSGARPQESTAAQAPENEASLPSASSSQVHS</sequence>
<reference key="1">
    <citation type="journal article" date="2004" name="Genome Biol.">
        <title>A genome annotation-driven approach to cloning the human ORFeome.</title>
        <authorList>
            <person name="Collins J.E."/>
            <person name="Wright C.L."/>
            <person name="Edwards C.A."/>
            <person name="Davis M.P."/>
            <person name="Grinham J.A."/>
            <person name="Cole C.G."/>
            <person name="Goward M.E."/>
            <person name="Aguado B."/>
            <person name="Mallya M."/>
            <person name="Mokrab Y."/>
            <person name="Huckle E.J."/>
            <person name="Beare D.M."/>
            <person name="Dunham I."/>
        </authorList>
    </citation>
    <scope>NUCLEOTIDE SEQUENCE [LARGE SCALE MRNA]</scope>
</reference>
<reference key="2">
    <citation type="journal article" date="2004" name="Nat. Genet.">
        <title>Complete sequencing and characterization of 21,243 full-length human cDNAs.</title>
        <authorList>
            <person name="Ota T."/>
            <person name="Suzuki Y."/>
            <person name="Nishikawa T."/>
            <person name="Otsuki T."/>
            <person name="Sugiyama T."/>
            <person name="Irie R."/>
            <person name="Wakamatsu A."/>
            <person name="Hayashi K."/>
            <person name="Sato H."/>
            <person name="Nagai K."/>
            <person name="Kimura K."/>
            <person name="Makita H."/>
            <person name="Sekine M."/>
            <person name="Obayashi M."/>
            <person name="Nishi T."/>
            <person name="Shibahara T."/>
            <person name="Tanaka T."/>
            <person name="Ishii S."/>
            <person name="Yamamoto J."/>
            <person name="Saito K."/>
            <person name="Kawai Y."/>
            <person name="Isono Y."/>
            <person name="Nakamura Y."/>
            <person name="Nagahari K."/>
            <person name="Murakami K."/>
            <person name="Yasuda T."/>
            <person name="Iwayanagi T."/>
            <person name="Wagatsuma M."/>
            <person name="Shiratori A."/>
            <person name="Sudo H."/>
            <person name="Hosoiri T."/>
            <person name="Kaku Y."/>
            <person name="Kodaira H."/>
            <person name="Kondo H."/>
            <person name="Sugawara M."/>
            <person name="Takahashi M."/>
            <person name="Kanda K."/>
            <person name="Yokoi T."/>
            <person name="Furuya T."/>
            <person name="Kikkawa E."/>
            <person name="Omura Y."/>
            <person name="Abe K."/>
            <person name="Kamihara K."/>
            <person name="Katsuta N."/>
            <person name="Sato K."/>
            <person name="Tanikawa M."/>
            <person name="Yamazaki M."/>
            <person name="Ninomiya K."/>
            <person name="Ishibashi T."/>
            <person name="Yamashita H."/>
            <person name="Murakawa K."/>
            <person name="Fujimori K."/>
            <person name="Tanai H."/>
            <person name="Kimata M."/>
            <person name="Watanabe M."/>
            <person name="Hiraoka S."/>
            <person name="Chiba Y."/>
            <person name="Ishida S."/>
            <person name="Ono Y."/>
            <person name="Takiguchi S."/>
            <person name="Watanabe S."/>
            <person name="Yosida M."/>
            <person name="Hotuta T."/>
            <person name="Kusano J."/>
            <person name="Kanehori K."/>
            <person name="Takahashi-Fujii A."/>
            <person name="Hara H."/>
            <person name="Tanase T.-O."/>
            <person name="Nomura Y."/>
            <person name="Togiya S."/>
            <person name="Komai F."/>
            <person name="Hara R."/>
            <person name="Takeuchi K."/>
            <person name="Arita M."/>
            <person name="Imose N."/>
            <person name="Musashino K."/>
            <person name="Yuuki H."/>
            <person name="Oshima A."/>
            <person name="Sasaki N."/>
            <person name="Aotsuka S."/>
            <person name="Yoshikawa Y."/>
            <person name="Matsunawa H."/>
            <person name="Ichihara T."/>
            <person name="Shiohata N."/>
            <person name="Sano S."/>
            <person name="Moriya S."/>
            <person name="Momiyama H."/>
            <person name="Satoh N."/>
            <person name="Takami S."/>
            <person name="Terashima Y."/>
            <person name="Suzuki O."/>
            <person name="Nakagawa S."/>
            <person name="Senoh A."/>
            <person name="Mizoguchi H."/>
            <person name="Goto Y."/>
            <person name="Shimizu F."/>
            <person name="Wakebe H."/>
            <person name="Hishigaki H."/>
            <person name="Watanabe T."/>
            <person name="Sugiyama A."/>
            <person name="Takemoto M."/>
            <person name="Kawakami B."/>
            <person name="Yamazaki M."/>
            <person name="Watanabe K."/>
            <person name="Kumagai A."/>
            <person name="Itakura S."/>
            <person name="Fukuzumi Y."/>
            <person name="Fujimori Y."/>
            <person name="Komiyama M."/>
            <person name="Tashiro H."/>
            <person name="Tanigami A."/>
            <person name="Fujiwara T."/>
            <person name="Ono T."/>
            <person name="Yamada K."/>
            <person name="Fujii Y."/>
            <person name="Ozaki K."/>
            <person name="Hirao M."/>
            <person name="Ohmori Y."/>
            <person name="Kawabata A."/>
            <person name="Hikiji T."/>
            <person name="Kobatake N."/>
            <person name="Inagaki H."/>
            <person name="Ikema Y."/>
            <person name="Okamoto S."/>
            <person name="Okitani R."/>
            <person name="Kawakami T."/>
            <person name="Noguchi S."/>
            <person name="Itoh T."/>
            <person name="Shigeta K."/>
            <person name="Senba T."/>
            <person name="Matsumura K."/>
            <person name="Nakajima Y."/>
            <person name="Mizuno T."/>
            <person name="Morinaga M."/>
            <person name="Sasaki M."/>
            <person name="Togashi T."/>
            <person name="Oyama M."/>
            <person name="Hata H."/>
            <person name="Watanabe M."/>
            <person name="Komatsu T."/>
            <person name="Mizushima-Sugano J."/>
            <person name="Satoh T."/>
            <person name="Shirai Y."/>
            <person name="Takahashi Y."/>
            <person name="Nakagawa K."/>
            <person name="Okumura K."/>
            <person name="Nagase T."/>
            <person name="Nomura N."/>
            <person name="Kikuchi H."/>
            <person name="Masuho Y."/>
            <person name="Yamashita R."/>
            <person name="Nakai K."/>
            <person name="Yada T."/>
            <person name="Nakamura Y."/>
            <person name="Ohara O."/>
            <person name="Isogai T."/>
            <person name="Sugano S."/>
        </authorList>
    </citation>
    <scope>NUCLEOTIDE SEQUENCE [LARGE SCALE MRNA]</scope>
    <source>
        <tissue>Testis</tissue>
    </source>
</reference>
<reference key="3">
    <citation type="journal article" date="1999" name="Nature">
        <title>The DNA sequence of human chromosome 22.</title>
        <authorList>
            <person name="Dunham I."/>
            <person name="Hunt A.R."/>
            <person name="Collins J.E."/>
            <person name="Bruskiewich R."/>
            <person name="Beare D.M."/>
            <person name="Clamp M."/>
            <person name="Smink L.J."/>
            <person name="Ainscough R."/>
            <person name="Almeida J.P."/>
            <person name="Babbage A.K."/>
            <person name="Bagguley C."/>
            <person name="Bailey J."/>
            <person name="Barlow K.F."/>
            <person name="Bates K.N."/>
            <person name="Beasley O.P."/>
            <person name="Bird C.P."/>
            <person name="Blakey S.E."/>
            <person name="Bridgeman A.M."/>
            <person name="Buck D."/>
            <person name="Burgess J."/>
            <person name="Burrill W.D."/>
            <person name="Burton J."/>
            <person name="Carder C."/>
            <person name="Carter N.P."/>
            <person name="Chen Y."/>
            <person name="Clark G."/>
            <person name="Clegg S.M."/>
            <person name="Cobley V.E."/>
            <person name="Cole C.G."/>
            <person name="Collier R.E."/>
            <person name="Connor R."/>
            <person name="Conroy D."/>
            <person name="Corby N.R."/>
            <person name="Coville G.J."/>
            <person name="Cox A.V."/>
            <person name="Davis J."/>
            <person name="Dawson E."/>
            <person name="Dhami P.D."/>
            <person name="Dockree C."/>
            <person name="Dodsworth S.J."/>
            <person name="Durbin R.M."/>
            <person name="Ellington A.G."/>
            <person name="Evans K.L."/>
            <person name="Fey J.M."/>
            <person name="Fleming K."/>
            <person name="French L."/>
            <person name="Garner A.A."/>
            <person name="Gilbert J.G.R."/>
            <person name="Goward M.E."/>
            <person name="Grafham D.V."/>
            <person name="Griffiths M.N.D."/>
            <person name="Hall C."/>
            <person name="Hall R.E."/>
            <person name="Hall-Tamlyn G."/>
            <person name="Heathcott R.W."/>
            <person name="Ho S."/>
            <person name="Holmes S."/>
            <person name="Hunt S.E."/>
            <person name="Jones M.C."/>
            <person name="Kershaw J."/>
            <person name="Kimberley A.M."/>
            <person name="King A."/>
            <person name="Laird G.K."/>
            <person name="Langford C.F."/>
            <person name="Leversha M.A."/>
            <person name="Lloyd C."/>
            <person name="Lloyd D.M."/>
            <person name="Martyn I.D."/>
            <person name="Mashreghi-Mohammadi M."/>
            <person name="Matthews L.H."/>
            <person name="Mccann O.T."/>
            <person name="Mcclay J."/>
            <person name="Mclaren S."/>
            <person name="McMurray A.A."/>
            <person name="Milne S.A."/>
            <person name="Mortimore B.J."/>
            <person name="Odell C.N."/>
            <person name="Pavitt R."/>
            <person name="Pearce A.V."/>
            <person name="Pearson D."/>
            <person name="Phillimore B.J.C.T."/>
            <person name="Phillips S.H."/>
            <person name="Plumb R.W."/>
            <person name="Ramsay H."/>
            <person name="Ramsey Y."/>
            <person name="Rogers L."/>
            <person name="Ross M.T."/>
            <person name="Scott C.E."/>
            <person name="Sehra H.K."/>
            <person name="Skuce C.D."/>
            <person name="Smalley S."/>
            <person name="Smith M.L."/>
            <person name="Soderlund C."/>
            <person name="Spragon L."/>
            <person name="Steward C.A."/>
            <person name="Sulston J.E."/>
            <person name="Swann R.M."/>
            <person name="Vaudin M."/>
            <person name="Wall M."/>
            <person name="Wallis J.M."/>
            <person name="Whiteley M.N."/>
            <person name="Willey D.L."/>
            <person name="Williams L."/>
            <person name="Williams S.A."/>
            <person name="Williamson H."/>
            <person name="Wilmer T.E."/>
            <person name="Wilming L."/>
            <person name="Wright C.L."/>
            <person name="Hubbard T."/>
            <person name="Bentley D.R."/>
            <person name="Beck S."/>
            <person name="Rogers J."/>
            <person name="Shimizu N."/>
            <person name="Minoshima S."/>
            <person name="Kawasaki K."/>
            <person name="Sasaki T."/>
            <person name="Asakawa S."/>
            <person name="Kudoh J."/>
            <person name="Shintani A."/>
            <person name="Shibuya K."/>
            <person name="Yoshizaki Y."/>
            <person name="Aoki N."/>
            <person name="Mitsuyama S."/>
            <person name="Roe B.A."/>
            <person name="Chen F."/>
            <person name="Chu L."/>
            <person name="Crabtree J."/>
            <person name="Deschamps S."/>
            <person name="Do A."/>
            <person name="Do T."/>
            <person name="Dorman A."/>
            <person name="Fang F."/>
            <person name="Fu Y."/>
            <person name="Hu P."/>
            <person name="Hua A."/>
            <person name="Kenton S."/>
            <person name="Lai H."/>
            <person name="Lao H.I."/>
            <person name="Lewis J."/>
            <person name="Lewis S."/>
            <person name="Lin S.-P."/>
            <person name="Loh P."/>
            <person name="Malaj E."/>
            <person name="Nguyen T."/>
            <person name="Pan H."/>
            <person name="Phan S."/>
            <person name="Qi S."/>
            <person name="Qian Y."/>
            <person name="Ray L."/>
            <person name="Ren Q."/>
            <person name="Shaull S."/>
            <person name="Sloan D."/>
            <person name="Song L."/>
            <person name="Wang Q."/>
            <person name="Wang Y."/>
            <person name="Wang Z."/>
            <person name="White J."/>
            <person name="Willingham D."/>
            <person name="Wu H."/>
            <person name="Yao Z."/>
            <person name="Zhan M."/>
            <person name="Zhang G."/>
            <person name="Chissoe S."/>
            <person name="Murray J."/>
            <person name="Miller N."/>
            <person name="Minx P."/>
            <person name="Fulton R."/>
            <person name="Johnson D."/>
            <person name="Bemis G."/>
            <person name="Bentley D."/>
            <person name="Bradshaw H."/>
            <person name="Bourne S."/>
            <person name="Cordes M."/>
            <person name="Du Z."/>
            <person name="Fulton L."/>
            <person name="Goela D."/>
            <person name="Graves T."/>
            <person name="Hawkins J."/>
            <person name="Hinds K."/>
            <person name="Kemp K."/>
            <person name="Latreille P."/>
            <person name="Layman D."/>
            <person name="Ozersky P."/>
            <person name="Rohlfing T."/>
            <person name="Scheet P."/>
            <person name="Walker C."/>
            <person name="Wamsley A."/>
            <person name="Wohldmann P."/>
            <person name="Pepin K."/>
            <person name="Nelson J."/>
            <person name="Korf I."/>
            <person name="Bedell J.A."/>
            <person name="Hillier L.W."/>
            <person name="Mardis E."/>
            <person name="Waterston R."/>
            <person name="Wilson R."/>
            <person name="Emanuel B.S."/>
            <person name="Shaikh T."/>
            <person name="Kurahashi H."/>
            <person name="Saitta S."/>
            <person name="Budarf M.L."/>
            <person name="McDermid H.E."/>
            <person name="Johnson A."/>
            <person name="Wong A.C.C."/>
            <person name="Morrow B.E."/>
            <person name="Edelmann L."/>
            <person name="Kim U.J."/>
            <person name="Shizuya H."/>
            <person name="Simon M.I."/>
            <person name="Dumanski J.P."/>
            <person name="Peyrard M."/>
            <person name="Kedra D."/>
            <person name="Seroussi E."/>
            <person name="Fransson I."/>
            <person name="Tapia I."/>
            <person name="Bruder C.E."/>
            <person name="O'Brien K.P."/>
            <person name="Wilkinson P."/>
            <person name="Bodenteich A."/>
            <person name="Hartman K."/>
            <person name="Hu X."/>
            <person name="Khan A.S."/>
            <person name="Lane L."/>
            <person name="Tilahun Y."/>
            <person name="Wright H."/>
        </authorList>
    </citation>
    <scope>NUCLEOTIDE SEQUENCE [LARGE SCALE GENOMIC DNA]</scope>
</reference>
<reference key="4">
    <citation type="journal article" date="2004" name="Genome Res.">
        <title>The status, quality, and expansion of the NIH full-length cDNA project: the Mammalian Gene Collection (MGC).</title>
        <authorList>
            <consortium name="The MGC Project Team"/>
        </authorList>
    </citation>
    <scope>NUCLEOTIDE SEQUENCE [LARGE SCALE MRNA]</scope>
    <scope>VARIANTS GLY-121 AND HIS-285</scope>
    <source>
        <tissue>Brain</tissue>
    </source>
</reference>
<reference key="5">
    <citation type="journal article" date="2007" name="J. Biol. Chem.">
        <title>PAWP, a sperm-specific WW domain-binding protein, promotes meiotic resumption and pronuclear development during fertilization.</title>
        <authorList>
            <person name="Wu A.T.H."/>
            <person name="Sutovsky P."/>
            <person name="Manandhar G."/>
            <person name="Xu W."/>
            <person name="Katayama M."/>
            <person name="Day B.N."/>
            <person name="Park K.-W."/>
            <person name="Yi Y.-J."/>
            <person name="Xi Y.W."/>
            <person name="Prather R.S."/>
            <person name="Oko R."/>
        </authorList>
    </citation>
    <scope>NUCLEOTIDE SEQUENCE [MRNA] OF 75-309</scope>
    <scope>TISSUE SPECIFICITY</scope>
    <scope>MOTIF</scope>
</reference>
<proteinExistence type="evidence at protein level"/>
<comment type="function">
    <text evidence="1">May play a role in meiotic resumption and pronuclear formation, mediated by a WW domain-signaling pathway during fertilization.</text>
</comment>
<comment type="interaction">
    <interactant intactId="EBI-17769315">
        <id>Q6ICG8</id>
    </interactant>
    <interactant intactId="EBI-11976595">
        <id>Q8IXW7</id>
        <label>FMR1</label>
    </interactant>
    <organismsDiffer>false</organismsDiffer>
    <experiments>3</experiments>
</comment>
<comment type="interaction">
    <interactant intactId="EBI-17769315">
        <id>Q6ICG8</id>
    </interactant>
    <interactant intactId="EBI-21591415">
        <id>P13473-2</id>
        <label>LAMP2</label>
    </interactant>
    <organismsDiffer>false</organismsDiffer>
    <experiments>3</experiments>
</comment>
<comment type="tissue specificity">
    <text evidence="4">Expressed in testis.</text>
</comment>
<comment type="sequence caution" evidence="5">
    <conflict type="frameshift">
        <sequence resource="EMBL-CDS" id="AAH22549"/>
    </conflict>
</comment>
<dbReference type="EMBL" id="CR456400">
    <property type="protein sequence ID" value="CAG30286.1"/>
    <property type="molecule type" value="mRNA"/>
</dbReference>
<dbReference type="EMBL" id="AK128138">
    <property type="protein sequence ID" value="BAG54636.1"/>
    <property type="molecule type" value="mRNA"/>
</dbReference>
<dbReference type="EMBL" id="Z99716">
    <property type="status" value="NOT_ANNOTATED_CDS"/>
    <property type="molecule type" value="Genomic_DNA"/>
</dbReference>
<dbReference type="EMBL" id="BC022546">
    <property type="protein sequence ID" value="AAH22546.1"/>
    <property type="molecule type" value="mRNA"/>
</dbReference>
<dbReference type="EMBL" id="BC022549">
    <property type="protein sequence ID" value="AAH22549.1"/>
    <property type="status" value="ALT_FRAME"/>
    <property type="molecule type" value="mRNA"/>
</dbReference>
<dbReference type="EMBL" id="AF393575">
    <property type="protein sequence ID" value="AAQ02873.1"/>
    <property type="molecule type" value="mRNA"/>
</dbReference>
<dbReference type="CCDS" id="CCDS14029.1"/>
<dbReference type="RefSeq" id="NP_689826.2">
    <property type="nucleotide sequence ID" value="NM_152613.3"/>
</dbReference>
<dbReference type="RefSeq" id="XP_047297130.1">
    <property type="nucleotide sequence ID" value="XM_047441174.1"/>
</dbReference>
<dbReference type="RefSeq" id="XP_047297131.1">
    <property type="nucleotide sequence ID" value="XM_047441175.1"/>
</dbReference>
<dbReference type="RefSeq" id="XP_054181181.1">
    <property type="nucleotide sequence ID" value="XM_054325206.1"/>
</dbReference>
<dbReference type="RefSeq" id="XP_054181182.1">
    <property type="nucleotide sequence ID" value="XM_054325207.1"/>
</dbReference>
<dbReference type="SMR" id="Q6ICG8"/>
<dbReference type="BioGRID" id="127900">
    <property type="interactions" value="12"/>
</dbReference>
<dbReference type="FunCoup" id="Q6ICG8">
    <property type="interactions" value="8"/>
</dbReference>
<dbReference type="IntAct" id="Q6ICG8">
    <property type="interactions" value="12"/>
</dbReference>
<dbReference type="STRING" id="9606.ENSP00000332983"/>
<dbReference type="GlyGen" id="Q6ICG8">
    <property type="glycosylation" value="1 site, 1 N-linked glycan (1 site)"/>
</dbReference>
<dbReference type="iPTMnet" id="Q6ICG8"/>
<dbReference type="PhosphoSitePlus" id="Q6ICG8"/>
<dbReference type="BioMuta" id="WBP2NL"/>
<dbReference type="DMDM" id="74757724"/>
<dbReference type="MassIVE" id="Q6ICG8"/>
<dbReference type="PaxDb" id="9606-ENSP00000332983"/>
<dbReference type="PeptideAtlas" id="Q6ICG8"/>
<dbReference type="ProteomicsDB" id="66390"/>
<dbReference type="Antibodypedia" id="27190">
    <property type="antibodies" value="100 antibodies from 20 providers"/>
</dbReference>
<dbReference type="DNASU" id="164684"/>
<dbReference type="Ensembl" id="ENST00000328823.13">
    <property type="protein sequence ID" value="ENSP00000332983.9"/>
    <property type="gene ID" value="ENSG00000183066.15"/>
</dbReference>
<dbReference type="Ensembl" id="ENST00000329620.9">
    <property type="protein sequence ID" value="ENSP00000328800.5"/>
    <property type="gene ID" value="ENSG00000183066.15"/>
</dbReference>
<dbReference type="Ensembl" id="ENST00000436265.5">
    <property type="protein sequence ID" value="ENSP00000401002.1"/>
    <property type="gene ID" value="ENSG00000183066.15"/>
</dbReference>
<dbReference type="GeneID" id="164684"/>
<dbReference type="KEGG" id="hsa:164684"/>
<dbReference type="MANE-Select" id="ENST00000328823.13">
    <property type="protein sequence ID" value="ENSP00000332983.9"/>
    <property type="RefSeq nucleotide sequence ID" value="NM_152613.3"/>
    <property type="RefSeq protein sequence ID" value="NP_689826.2"/>
</dbReference>
<dbReference type="UCSC" id="uc003bbt.4">
    <property type="organism name" value="human"/>
</dbReference>
<dbReference type="AGR" id="HGNC:28389"/>
<dbReference type="CTD" id="164684"/>
<dbReference type="DisGeNET" id="164684"/>
<dbReference type="GeneCards" id="WBP2NL"/>
<dbReference type="HGNC" id="HGNC:28389">
    <property type="gene designation" value="WBP2NL"/>
</dbReference>
<dbReference type="HPA" id="ENSG00000183066">
    <property type="expression patterns" value="Tissue enriched (testis)"/>
</dbReference>
<dbReference type="MIM" id="610981">
    <property type="type" value="gene"/>
</dbReference>
<dbReference type="neXtProt" id="NX_Q6ICG8"/>
<dbReference type="OpenTargets" id="ENSG00000183066"/>
<dbReference type="PharmGKB" id="PA145147710"/>
<dbReference type="VEuPathDB" id="HostDB:ENSG00000183066"/>
<dbReference type="eggNOG" id="KOG3294">
    <property type="taxonomic scope" value="Eukaryota"/>
</dbReference>
<dbReference type="GeneTree" id="ENSGT00530000063718"/>
<dbReference type="InParanoid" id="Q6ICG8"/>
<dbReference type="OMA" id="PLGTDYW"/>
<dbReference type="OrthoDB" id="1259151at2759"/>
<dbReference type="PAN-GO" id="Q6ICG8">
    <property type="GO annotations" value="4 GO annotations based on evolutionary models"/>
</dbReference>
<dbReference type="PhylomeDB" id="Q6ICG8"/>
<dbReference type="TreeFam" id="TF314141"/>
<dbReference type="PathwayCommons" id="Q6ICG8"/>
<dbReference type="SignaLink" id="Q6ICG8"/>
<dbReference type="BioGRID-ORCS" id="164684">
    <property type="hits" value="11 hits in 1142 CRISPR screens"/>
</dbReference>
<dbReference type="ChiTaRS" id="WBP2NL">
    <property type="organism name" value="human"/>
</dbReference>
<dbReference type="GenomeRNAi" id="164684"/>
<dbReference type="Pharos" id="Q6ICG8">
    <property type="development level" value="Tbio"/>
</dbReference>
<dbReference type="PRO" id="PR:Q6ICG8"/>
<dbReference type="Proteomes" id="UP000005640">
    <property type="component" value="Chromosome 22"/>
</dbReference>
<dbReference type="RNAct" id="Q6ICG8">
    <property type="molecule type" value="protein"/>
</dbReference>
<dbReference type="Bgee" id="ENSG00000183066">
    <property type="expression patterns" value="Expressed in left testis and 97 other cell types or tissues"/>
</dbReference>
<dbReference type="ExpressionAtlas" id="Q6ICG8">
    <property type="expression patterns" value="baseline and differential"/>
</dbReference>
<dbReference type="GO" id="GO:0005634">
    <property type="term" value="C:nucleus"/>
    <property type="evidence" value="ECO:0000318"/>
    <property type="project" value="GO_Central"/>
</dbReference>
<dbReference type="GO" id="GO:0033011">
    <property type="term" value="C:perinuclear theca"/>
    <property type="evidence" value="ECO:0000250"/>
    <property type="project" value="HGNC-UCL"/>
</dbReference>
<dbReference type="GO" id="GO:0036126">
    <property type="term" value="C:sperm flagellum"/>
    <property type="evidence" value="ECO:0000314"/>
    <property type="project" value="UniProtKB"/>
</dbReference>
<dbReference type="GO" id="GO:0061827">
    <property type="term" value="C:sperm head"/>
    <property type="evidence" value="ECO:0000314"/>
    <property type="project" value="UniProtKB"/>
</dbReference>
<dbReference type="GO" id="GO:0031490">
    <property type="term" value="F:chromatin DNA binding"/>
    <property type="evidence" value="ECO:0000318"/>
    <property type="project" value="GO_Central"/>
</dbReference>
<dbReference type="GO" id="GO:0003713">
    <property type="term" value="F:transcription coactivator activity"/>
    <property type="evidence" value="ECO:0000318"/>
    <property type="project" value="GO_Central"/>
</dbReference>
<dbReference type="GO" id="GO:0050699">
    <property type="term" value="F:WW domain binding"/>
    <property type="evidence" value="ECO:0000250"/>
    <property type="project" value="HGNC-UCL"/>
</dbReference>
<dbReference type="GO" id="GO:0007343">
    <property type="term" value="P:egg activation"/>
    <property type="evidence" value="ECO:0000250"/>
    <property type="project" value="HGNC-UCL"/>
</dbReference>
<dbReference type="GO" id="GO:0035039">
    <property type="term" value="P:male pronucleus assembly"/>
    <property type="evidence" value="ECO:0000250"/>
    <property type="project" value="HGNC-UCL"/>
</dbReference>
<dbReference type="GO" id="GO:0051321">
    <property type="term" value="P:meiotic cell cycle"/>
    <property type="evidence" value="ECO:0007669"/>
    <property type="project" value="UniProtKB-KW"/>
</dbReference>
<dbReference type="GO" id="GO:0045893">
    <property type="term" value="P:positive regulation of DNA-templated transcription"/>
    <property type="evidence" value="ECO:0000318"/>
    <property type="project" value="GO_Central"/>
</dbReference>
<dbReference type="CDD" id="cd13214">
    <property type="entry name" value="PH-GRAM_WBP2"/>
    <property type="match status" value="1"/>
</dbReference>
<dbReference type="InterPro" id="IPR004182">
    <property type="entry name" value="GRAM"/>
</dbReference>
<dbReference type="InterPro" id="IPR044852">
    <property type="entry name" value="WBP2-like"/>
</dbReference>
<dbReference type="PANTHER" id="PTHR31606:SF2">
    <property type="entry name" value="POSTACROSOMAL SHEATH WW DOMAIN-BINDING PROTEIN"/>
    <property type="match status" value="1"/>
</dbReference>
<dbReference type="PANTHER" id="PTHR31606">
    <property type="entry name" value="WW DOMAIN BINDING PROTEIN 2, ISOFORM E"/>
    <property type="match status" value="1"/>
</dbReference>
<dbReference type="Pfam" id="PF02893">
    <property type="entry name" value="GRAM"/>
    <property type="match status" value="1"/>
</dbReference>
<dbReference type="SUPFAM" id="SSF50729">
    <property type="entry name" value="PH domain-like"/>
    <property type="match status" value="1"/>
</dbReference>